<gene>
    <name type="ORF">DDB_G0294184</name>
</gene>
<accession>Q54AV4</accession>
<organism>
    <name type="scientific">Dictyostelium discoideum</name>
    <name type="common">Social amoeba</name>
    <dbReference type="NCBI Taxonomy" id="44689"/>
    <lineage>
        <taxon>Eukaryota</taxon>
        <taxon>Amoebozoa</taxon>
        <taxon>Evosea</taxon>
        <taxon>Eumycetozoa</taxon>
        <taxon>Dictyostelia</taxon>
        <taxon>Dictyosteliales</taxon>
        <taxon>Dictyosteliaceae</taxon>
        <taxon>Dictyostelium</taxon>
    </lineage>
</organism>
<feature type="chain" id="PRO_0000343922" description="Putative uncharacterized protein DDB_G0294184">
    <location>
        <begin position="1"/>
        <end position="21"/>
    </location>
</feature>
<name>Y5085_DICDI</name>
<protein>
    <recommendedName>
        <fullName>Putative uncharacterized protein DDB_G0294184</fullName>
    </recommendedName>
</protein>
<dbReference type="EMBL" id="AAFI02000231">
    <property type="protein sequence ID" value="EAL60391.1"/>
    <property type="molecule type" value="Genomic_DNA"/>
</dbReference>
<dbReference type="RefSeq" id="XP_628804.1">
    <property type="nucleotide sequence ID" value="XM_628802.1"/>
</dbReference>
<dbReference type="PaxDb" id="44689-DDB0215085"/>
<dbReference type="EnsemblProtists" id="EAL60391">
    <property type="protein sequence ID" value="EAL60391"/>
    <property type="gene ID" value="DDB_G0294184"/>
</dbReference>
<dbReference type="GeneID" id="3385468"/>
<dbReference type="KEGG" id="ddi:DDB_G0294184"/>
<dbReference type="HOGENOM" id="CLU_3427243_0_0_1"/>
<dbReference type="InParanoid" id="Q54AV4"/>
<dbReference type="PRO" id="PR:Q54AV4"/>
<dbReference type="Proteomes" id="UP000002195">
    <property type="component" value="Unassembled WGS sequence"/>
</dbReference>
<sequence length="21" mass="2422">MAAEINMVILAWDLCLLELPY</sequence>
<proteinExistence type="predicted"/>
<reference key="1">
    <citation type="journal article" date="2005" name="Nature">
        <title>The genome of the social amoeba Dictyostelium discoideum.</title>
        <authorList>
            <person name="Eichinger L."/>
            <person name="Pachebat J.A."/>
            <person name="Gloeckner G."/>
            <person name="Rajandream M.A."/>
            <person name="Sucgang R."/>
            <person name="Berriman M."/>
            <person name="Song J."/>
            <person name="Olsen R."/>
            <person name="Szafranski K."/>
            <person name="Xu Q."/>
            <person name="Tunggal B."/>
            <person name="Kummerfeld S."/>
            <person name="Madera M."/>
            <person name="Konfortov B.A."/>
            <person name="Rivero F."/>
            <person name="Bankier A.T."/>
            <person name="Lehmann R."/>
            <person name="Hamlin N."/>
            <person name="Davies R."/>
            <person name="Gaudet P."/>
            <person name="Fey P."/>
            <person name="Pilcher K."/>
            <person name="Chen G."/>
            <person name="Saunders D."/>
            <person name="Sodergren E.J."/>
            <person name="Davis P."/>
            <person name="Kerhornou A."/>
            <person name="Nie X."/>
            <person name="Hall N."/>
            <person name="Anjard C."/>
            <person name="Hemphill L."/>
            <person name="Bason N."/>
            <person name="Farbrother P."/>
            <person name="Desany B."/>
            <person name="Just E."/>
            <person name="Morio T."/>
            <person name="Rost R."/>
            <person name="Churcher C.M."/>
            <person name="Cooper J."/>
            <person name="Haydock S."/>
            <person name="van Driessche N."/>
            <person name="Cronin A."/>
            <person name="Goodhead I."/>
            <person name="Muzny D.M."/>
            <person name="Mourier T."/>
            <person name="Pain A."/>
            <person name="Lu M."/>
            <person name="Harper D."/>
            <person name="Lindsay R."/>
            <person name="Hauser H."/>
            <person name="James K.D."/>
            <person name="Quiles M."/>
            <person name="Madan Babu M."/>
            <person name="Saito T."/>
            <person name="Buchrieser C."/>
            <person name="Wardroper A."/>
            <person name="Felder M."/>
            <person name="Thangavelu M."/>
            <person name="Johnson D."/>
            <person name="Knights A."/>
            <person name="Loulseged H."/>
            <person name="Mungall K.L."/>
            <person name="Oliver K."/>
            <person name="Price C."/>
            <person name="Quail M.A."/>
            <person name="Urushihara H."/>
            <person name="Hernandez J."/>
            <person name="Rabbinowitsch E."/>
            <person name="Steffen D."/>
            <person name="Sanders M."/>
            <person name="Ma J."/>
            <person name="Kohara Y."/>
            <person name="Sharp S."/>
            <person name="Simmonds M.N."/>
            <person name="Spiegler S."/>
            <person name="Tivey A."/>
            <person name="Sugano S."/>
            <person name="White B."/>
            <person name="Walker D."/>
            <person name="Woodward J.R."/>
            <person name="Winckler T."/>
            <person name="Tanaka Y."/>
            <person name="Shaulsky G."/>
            <person name="Schleicher M."/>
            <person name="Weinstock G.M."/>
            <person name="Rosenthal A."/>
            <person name="Cox E.C."/>
            <person name="Chisholm R.L."/>
            <person name="Gibbs R.A."/>
            <person name="Loomis W.F."/>
            <person name="Platzer M."/>
            <person name="Kay R.R."/>
            <person name="Williams J.G."/>
            <person name="Dear P.H."/>
            <person name="Noegel A.A."/>
            <person name="Barrell B.G."/>
            <person name="Kuspa A."/>
        </authorList>
    </citation>
    <scope>NUCLEOTIDE SEQUENCE [LARGE SCALE GENOMIC DNA]</scope>
    <source>
        <strain>AX4</strain>
    </source>
</reference>
<keyword id="KW-1185">Reference proteome</keyword>